<comment type="subunit">
    <text evidence="1">Part of the 30S ribosomal subunit.</text>
</comment>
<comment type="subcellular location">
    <subcellularLocation>
        <location>Plastid</location>
        <location>Chloroplast</location>
    </subcellularLocation>
</comment>
<comment type="similarity">
    <text evidence="1">Belongs to the universal ribosomal protein uS11 family.</text>
</comment>
<accession>Q0G9I6</accession>
<protein>
    <recommendedName>
        <fullName evidence="1">Small ribosomal subunit protein uS11c</fullName>
    </recommendedName>
    <alternativeName>
        <fullName evidence="3">30S ribosomal protein S11, chloroplastic</fullName>
    </alternativeName>
</protein>
<feature type="chain" id="PRO_0000276650" description="Small ribosomal subunit protein uS11c">
    <location>
        <begin position="1"/>
        <end position="138"/>
    </location>
</feature>
<feature type="region of interest" description="Disordered" evidence="2">
    <location>
        <begin position="1"/>
        <end position="24"/>
    </location>
</feature>
<feature type="compositionally biased region" description="Basic residues" evidence="2">
    <location>
        <begin position="9"/>
        <end position="24"/>
    </location>
</feature>
<proteinExistence type="inferred from homology"/>
<keyword id="KW-0150">Chloroplast</keyword>
<keyword id="KW-0934">Plastid</keyword>
<keyword id="KW-0687">Ribonucleoprotein</keyword>
<keyword id="KW-0689">Ribosomal protein</keyword>
<keyword id="KW-0694">RNA-binding</keyword>
<keyword id="KW-0699">rRNA-binding</keyword>
<name>RR11_LIRTU</name>
<geneLocation type="chloroplast"/>
<gene>
    <name evidence="1" type="primary">rps11</name>
</gene>
<organism>
    <name type="scientific">Liriodendron tulipifera</name>
    <name type="common">Tuliptree</name>
    <name type="synonym">Tulip poplar</name>
    <dbReference type="NCBI Taxonomy" id="3415"/>
    <lineage>
        <taxon>Eukaryota</taxon>
        <taxon>Viridiplantae</taxon>
        <taxon>Streptophyta</taxon>
        <taxon>Embryophyta</taxon>
        <taxon>Tracheophyta</taxon>
        <taxon>Spermatophyta</taxon>
        <taxon>Magnoliopsida</taxon>
        <taxon>Magnoliidae</taxon>
        <taxon>Magnoliales</taxon>
        <taxon>Magnoliaceae</taxon>
        <taxon>Liriodendron</taxon>
    </lineage>
</organism>
<reference key="1">
    <citation type="journal article" date="2006" name="BMC Evol. Biol.">
        <title>Complete plastid genome sequences of Drimys, Liriodendron, and Piper: implications for the phylogenetic relationships of magnoliids.</title>
        <authorList>
            <person name="Cai Z."/>
            <person name="Penaflor C."/>
            <person name="Kuehl J.V."/>
            <person name="Leebens-Mack J."/>
            <person name="Carlson J.E."/>
            <person name="dePamphilis C.W."/>
            <person name="Boore J.L."/>
            <person name="Jansen R.K."/>
        </authorList>
    </citation>
    <scope>NUCLEOTIDE SEQUENCE [LARGE SCALE GENOMIC DNA]</scope>
</reference>
<dbReference type="EMBL" id="DQ899947">
    <property type="protein sequence ID" value="ABI32542.1"/>
    <property type="molecule type" value="Genomic_DNA"/>
</dbReference>
<dbReference type="RefSeq" id="YP_740235.1">
    <property type="nucleotide sequence ID" value="NC_008326.1"/>
</dbReference>
<dbReference type="SMR" id="Q0G9I6"/>
<dbReference type="GeneID" id="4266659"/>
<dbReference type="GO" id="GO:0009507">
    <property type="term" value="C:chloroplast"/>
    <property type="evidence" value="ECO:0007669"/>
    <property type="project" value="UniProtKB-SubCell"/>
</dbReference>
<dbReference type="GO" id="GO:1990904">
    <property type="term" value="C:ribonucleoprotein complex"/>
    <property type="evidence" value="ECO:0007669"/>
    <property type="project" value="UniProtKB-KW"/>
</dbReference>
<dbReference type="GO" id="GO:0005840">
    <property type="term" value="C:ribosome"/>
    <property type="evidence" value="ECO:0007669"/>
    <property type="project" value="UniProtKB-KW"/>
</dbReference>
<dbReference type="GO" id="GO:0019843">
    <property type="term" value="F:rRNA binding"/>
    <property type="evidence" value="ECO:0007669"/>
    <property type="project" value="UniProtKB-UniRule"/>
</dbReference>
<dbReference type="GO" id="GO:0003735">
    <property type="term" value="F:structural constituent of ribosome"/>
    <property type="evidence" value="ECO:0007669"/>
    <property type="project" value="InterPro"/>
</dbReference>
<dbReference type="GO" id="GO:0006412">
    <property type="term" value="P:translation"/>
    <property type="evidence" value="ECO:0007669"/>
    <property type="project" value="UniProtKB-UniRule"/>
</dbReference>
<dbReference type="FunFam" id="3.30.420.80:FF:000003">
    <property type="entry name" value="30S ribosomal protein S11, chloroplastic"/>
    <property type="match status" value="1"/>
</dbReference>
<dbReference type="Gene3D" id="3.30.420.80">
    <property type="entry name" value="Ribosomal protein S11"/>
    <property type="match status" value="1"/>
</dbReference>
<dbReference type="HAMAP" id="MF_01310">
    <property type="entry name" value="Ribosomal_uS11"/>
    <property type="match status" value="1"/>
</dbReference>
<dbReference type="InterPro" id="IPR001971">
    <property type="entry name" value="Ribosomal_uS11"/>
</dbReference>
<dbReference type="InterPro" id="IPR019981">
    <property type="entry name" value="Ribosomal_uS11_bac-type"/>
</dbReference>
<dbReference type="InterPro" id="IPR018102">
    <property type="entry name" value="Ribosomal_uS11_CS"/>
</dbReference>
<dbReference type="InterPro" id="IPR036967">
    <property type="entry name" value="Ribosomal_uS11_sf"/>
</dbReference>
<dbReference type="NCBIfam" id="NF003698">
    <property type="entry name" value="PRK05309.1"/>
    <property type="match status" value="1"/>
</dbReference>
<dbReference type="NCBIfam" id="TIGR03632">
    <property type="entry name" value="uS11_bact"/>
    <property type="match status" value="1"/>
</dbReference>
<dbReference type="PANTHER" id="PTHR11759">
    <property type="entry name" value="40S RIBOSOMAL PROTEIN S14/30S RIBOSOMAL PROTEIN S11"/>
    <property type="match status" value="1"/>
</dbReference>
<dbReference type="Pfam" id="PF00411">
    <property type="entry name" value="Ribosomal_S11"/>
    <property type="match status" value="1"/>
</dbReference>
<dbReference type="PIRSF" id="PIRSF002131">
    <property type="entry name" value="Ribosomal_S11"/>
    <property type="match status" value="1"/>
</dbReference>
<dbReference type="SUPFAM" id="SSF53137">
    <property type="entry name" value="Translational machinery components"/>
    <property type="match status" value="1"/>
</dbReference>
<dbReference type="PROSITE" id="PS00054">
    <property type="entry name" value="RIBOSOMAL_S11"/>
    <property type="match status" value="1"/>
</dbReference>
<evidence type="ECO:0000255" key="1">
    <source>
        <dbReference type="HAMAP-Rule" id="MF_01310"/>
    </source>
</evidence>
<evidence type="ECO:0000256" key="2">
    <source>
        <dbReference type="SAM" id="MobiDB-lite"/>
    </source>
</evidence>
<evidence type="ECO:0000305" key="3"/>
<sequence length="138" mass="14898">MTKPIPRIGSRRNGRIGSRKSGRRIPKGVIHVQASFNNTIVTVTDVLGQVVSWSSAGTCGFRGTRRGTPFAAQTAAGNAIRTVVDQGMQRAEVMIKGPGLGRDAALRAIRRSGILLSFVRDVTPMPHNGCRPPKKRRV</sequence>